<protein>
    <recommendedName>
        <fullName evidence="1">Peptidyl-tRNA hydrolase</fullName>
        <shortName evidence="1">Pth</shortName>
        <ecNumber evidence="1">3.1.1.29</ecNumber>
    </recommendedName>
</protein>
<feature type="chain" id="PRO_1000010634" description="Peptidyl-tRNA hydrolase">
    <location>
        <begin position="1"/>
        <end position="194"/>
    </location>
</feature>
<feature type="active site" description="Proton acceptor" evidence="1">
    <location>
        <position position="22"/>
    </location>
</feature>
<feature type="binding site" evidence="1">
    <location>
        <position position="17"/>
    </location>
    <ligand>
        <name>tRNA</name>
        <dbReference type="ChEBI" id="CHEBI:17843"/>
    </ligand>
</feature>
<feature type="binding site" evidence="1">
    <location>
        <position position="68"/>
    </location>
    <ligand>
        <name>tRNA</name>
        <dbReference type="ChEBI" id="CHEBI:17843"/>
    </ligand>
</feature>
<feature type="binding site" evidence="1">
    <location>
        <position position="70"/>
    </location>
    <ligand>
        <name>tRNA</name>
        <dbReference type="ChEBI" id="CHEBI:17843"/>
    </ligand>
</feature>
<feature type="binding site" evidence="1">
    <location>
        <position position="116"/>
    </location>
    <ligand>
        <name>tRNA</name>
        <dbReference type="ChEBI" id="CHEBI:17843"/>
    </ligand>
</feature>
<feature type="site" description="Discriminates between blocked and unblocked aminoacyl-tRNA" evidence="1">
    <location>
        <position position="12"/>
    </location>
</feature>
<feature type="site" description="Stabilizes the basic form of H active site to accept a proton" evidence="1">
    <location>
        <position position="95"/>
    </location>
</feature>
<proteinExistence type="inferred from homology"/>
<name>PTH_PSEP1</name>
<evidence type="ECO:0000255" key="1">
    <source>
        <dbReference type="HAMAP-Rule" id="MF_00083"/>
    </source>
</evidence>
<accession>A5VYF8</accession>
<organism>
    <name type="scientific">Pseudomonas putida (strain ATCC 700007 / DSM 6899 / JCM 31910 / BCRC 17059 / LMG 24140 / F1)</name>
    <dbReference type="NCBI Taxonomy" id="351746"/>
    <lineage>
        <taxon>Bacteria</taxon>
        <taxon>Pseudomonadati</taxon>
        <taxon>Pseudomonadota</taxon>
        <taxon>Gammaproteobacteria</taxon>
        <taxon>Pseudomonadales</taxon>
        <taxon>Pseudomonadaceae</taxon>
        <taxon>Pseudomonas</taxon>
    </lineage>
</organism>
<comment type="function">
    <text evidence="1">Hydrolyzes ribosome-free peptidyl-tRNAs (with 1 or more amino acids incorporated), which drop off the ribosome during protein synthesis, or as a result of ribosome stalling.</text>
</comment>
<comment type="function">
    <text evidence="1">Catalyzes the release of premature peptidyl moieties from peptidyl-tRNA molecules trapped in stalled 50S ribosomal subunits, and thus maintains levels of free tRNAs and 50S ribosomes.</text>
</comment>
<comment type="catalytic activity">
    <reaction evidence="1">
        <text>an N-acyl-L-alpha-aminoacyl-tRNA + H2O = an N-acyl-L-amino acid + a tRNA + H(+)</text>
        <dbReference type="Rhea" id="RHEA:54448"/>
        <dbReference type="Rhea" id="RHEA-COMP:10123"/>
        <dbReference type="Rhea" id="RHEA-COMP:13883"/>
        <dbReference type="ChEBI" id="CHEBI:15377"/>
        <dbReference type="ChEBI" id="CHEBI:15378"/>
        <dbReference type="ChEBI" id="CHEBI:59874"/>
        <dbReference type="ChEBI" id="CHEBI:78442"/>
        <dbReference type="ChEBI" id="CHEBI:138191"/>
        <dbReference type="EC" id="3.1.1.29"/>
    </reaction>
</comment>
<comment type="subunit">
    <text evidence="1">Monomer.</text>
</comment>
<comment type="subcellular location">
    <subcellularLocation>
        <location evidence="1">Cytoplasm</location>
    </subcellularLocation>
</comment>
<comment type="similarity">
    <text evidence="1">Belongs to the PTH family.</text>
</comment>
<reference key="1">
    <citation type="submission" date="2007-05" db="EMBL/GenBank/DDBJ databases">
        <title>Complete sequence of Pseudomonas putida F1.</title>
        <authorList>
            <consortium name="US DOE Joint Genome Institute"/>
            <person name="Copeland A."/>
            <person name="Lucas S."/>
            <person name="Lapidus A."/>
            <person name="Barry K."/>
            <person name="Detter J.C."/>
            <person name="Glavina del Rio T."/>
            <person name="Hammon N."/>
            <person name="Israni S."/>
            <person name="Dalin E."/>
            <person name="Tice H."/>
            <person name="Pitluck S."/>
            <person name="Chain P."/>
            <person name="Malfatti S."/>
            <person name="Shin M."/>
            <person name="Vergez L."/>
            <person name="Schmutz J."/>
            <person name="Larimer F."/>
            <person name="Land M."/>
            <person name="Hauser L."/>
            <person name="Kyrpides N."/>
            <person name="Lykidis A."/>
            <person name="Parales R."/>
            <person name="Richardson P."/>
        </authorList>
    </citation>
    <scope>NUCLEOTIDE SEQUENCE [LARGE SCALE GENOMIC DNA]</scope>
    <source>
        <strain>ATCC 700007 / DSM 6899 / JCM 31910 / BCRC 17059 / LMG 24140 / F1</strain>
    </source>
</reference>
<dbReference type="EC" id="3.1.1.29" evidence="1"/>
<dbReference type="EMBL" id="CP000712">
    <property type="protein sequence ID" value="ABQ76918.1"/>
    <property type="molecule type" value="Genomic_DNA"/>
</dbReference>
<dbReference type="SMR" id="A5VYF8"/>
<dbReference type="KEGG" id="ppf:Pput_0754"/>
<dbReference type="eggNOG" id="COG0193">
    <property type="taxonomic scope" value="Bacteria"/>
</dbReference>
<dbReference type="HOGENOM" id="CLU_062456_3_1_6"/>
<dbReference type="GO" id="GO:0005737">
    <property type="term" value="C:cytoplasm"/>
    <property type="evidence" value="ECO:0007669"/>
    <property type="project" value="UniProtKB-SubCell"/>
</dbReference>
<dbReference type="GO" id="GO:0004045">
    <property type="term" value="F:peptidyl-tRNA hydrolase activity"/>
    <property type="evidence" value="ECO:0007669"/>
    <property type="project" value="UniProtKB-UniRule"/>
</dbReference>
<dbReference type="GO" id="GO:0000049">
    <property type="term" value="F:tRNA binding"/>
    <property type="evidence" value="ECO:0007669"/>
    <property type="project" value="UniProtKB-UniRule"/>
</dbReference>
<dbReference type="GO" id="GO:0006515">
    <property type="term" value="P:protein quality control for misfolded or incompletely synthesized proteins"/>
    <property type="evidence" value="ECO:0007669"/>
    <property type="project" value="UniProtKB-UniRule"/>
</dbReference>
<dbReference type="GO" id="GO:0072344">
    <property type="term" value="P:rescue of stalled ribosome"/>
    <property type="evidence" value="ECO:0007669"/>
    <property type="project" value="UniProtKB-UniRule"/>
</dbReference>
<dbReference type="CDD" id="cd00462">
    <property type="entry name" value="PTH"/>
    <property type="match status" value="1"/>
</dbReference>
<dbReference type="FunFam" id="3.40.50.1470:FF:000001">
    <property type="entry name" value="Peptidyl-tRNA hydrolase"/>
    <property type="match status" value="1"/>
</dbReference>
<dbReference type="Gene3D" id="3.40.50.1470">
    <property type="entry name" value="Peptidyl-tRNA hydrolase"/>
    <property type="match status" value="1"/>
</dbReference>
<dbReference type="HAMAP" id="MF_00083">
    <property type="entry name" value="Pept_tRNA_hydro_bact"/>
    <property type="match status" value="1"/>
</dbReference>
<dbReference type="InterPro" id="IPR001328">
    <property type="entry name" value="Pept_tRNA_hydro"/>
</dbReference>
<dbReference type="InterPro" id="IPR018171">
    <property type="entry name" value="Pept_tRNA_hydro_CS"/>
</dbReference>
<dbReference type="InterPro" id="IPR036416">
    <property type="entry name" value="Pept_tRNA_hydro_sf"/>
</dbReference>
<dbReference type="NCBIfam" id="TIGR00447">
    <property type="entry name" value="pth"/>
    <property type="match status" value="1"/>
</dbReference>
<dbReference type="PANTHER" id="PTHR17224">
    <property type="entry name" value="PEPTIDYL-TRNA HYDROLASE"/>
    <property type="match status" value="1"/>
</dbReference>
<dbReference type="PANTHER" id="PTHR17224:SF1">
    <property type="entry name" value="PEPTIDYL-TRNA HYDROLASE"/>
    <property type="match status" value="1"/>
</dbReference>
<dbReference type="Pfam" id="PF01195">
    <property type="entry name" value="Pept_tRNA_hydro"/>
    <property type="match status" value="1"/>
</dbReference>
<dbReference type="SUPFAM" id="SSF53178">
    <property type="entry name" value="Peptidyl-tRNA hydrolase-like"/>
    <property type="match status" value="1"/>
</dbReference>
<dbReference type="PROSITE" id="PS01195">
    <property type="entry name" value="PEPT_TRNA_HYDROL_1"/>
    <property type="match status" value="1"/>
</dbReference>
<dbReference type="PROSITE" id="PS01196">
    <property type="entry name" value="PEPT_TRNA_HYDROL_2"/>
    <property type="match status" value="1"/>
</dbReference>
<gene>
    <name evidence="1" type="primary">pth</name>
    <name type="ordered locus">Pput_0754</name>
</gene>
<keyword id="KW-0963">Cytoplasm</keyword>
<keyword id="KW-0378">Hydrolase</keyword>
<keyword id="KW-0694">RNA-binding</keyword>
<keyword id="KW-0820">tRNA-binding</keyword>
<sequence length="194" mass="20949">MTAIQLIVGLGNPGPEYEQTRHNAGALFVERLASAQRVSLTADKKYFGLTAKFSHQGNDVRLLIPTTYMNRSGQSVAALANFFRIKPEAILVAHDELDLPPGVAKLKRGGGHGGHNGLRDIIAQLGNQNDFHRLRLGIGHPGDAKLVSNFVLGRAPRAEQEKLDASIDFALGVLPDVLAGDFAKAMRELHSQKA</sequence>